<accession>A1A0L5</accession>
<dbReference type="EMBL" id="AP009256">
    <property type="protein sequence ID" value="BAF39248.1"/>
    <property type="molecule type" value="Genomic_DNA"/>
</dbReference>
<dbReference type="RefSeq" id="WP_003808431.1">
    <property type="nucleotide sequence ID" value="NZ_CAXVNC010000001.1"/>
</dbReference>
<dbReference type="SMR" id="A1A0L5"/>
<dbReference type="STRING" id="367928.BAD_0467"/>
<dbReference type="PaxDb" id="1680-BADO_0484"/>
<dbReference type="GeneID" id="4556450"/>
<dbReference type="KEGG" id="bad:BAD_0467"/>
<dbReference type="HOGENOM" id="CLU_108953_2_1_11"/>
<dbReference type="Proteomes" id="UP000008702">
    <property type="component" value="Chromosome"/>
</dbReference>
<dbReference type="GO" id="GO:0005829">
    <property type="term" value="C:cytosol"/>
    <property type="evidence" value="ECO:0007669"/>
    <property type="project" value="TreeGrafter"/>
</dbReference>
<dbReference type="GO" id="GO:0003723">
    <property type="term" value="F:RNA binding"/>
    <property type="evidence" value="ECO:0007669"/>
    <property type="project" value="UniProtKB-UniRule"/>
</dbReference>
<dbReference type="GO" id="GO:0070929">
    <property type="term" value="P:trans-translation"/>
    <property type="evidence" value="ECO:0007669"/>
    <property type="project" value="UniProtKB-UniRule"/>
</dbReference>
<dbReference type="CDD" id="cd09294">
    <property type="entry name" value="SmpB"/>
    <property type="match status" value="1"/>
</dbReference>
<dbReference type="Gene3D" id="2.40.280.10">
    <property type="match status" value="1"/>
</dbReference>
<dbReference type="HAMAP" id="MF_00023">
    <property type="entry name" value="SmpB"/>
    <property type="match status" value="1"/>
</dbReference>
<dbReference type="InterPro" id="IPR023620">
    <property type="entry name" value="SmpB"/>
</dbReference>
<dbReference type="InterPro" id="IPR000037">
    <property type="entry name" value="SsrA-bd_prot"/>
</dbReference>
<dbReference type="InterPro" id="IPR020081">
    <property type="entry name" value="SsrA-bd_prot_CS"/>
</dbReference>
<dbReference type="NCBIfam" id="NF003843">
    <property type="entry name" value="PRK05422.1"/>
    <property type="match status" value="1"/>
</dbReference>
<dbReference type="NCBIfam" id="TIGR00086">
    <property type="entry name" value="smpB"/>
    <property type="match status" value="1"/>
</dbReference>
<dbReference type="PANTHER" id="PTHR30308:SF2">
    <property type="entry name" value="SSRA-BINDING PROTEIN"/>
    <property type="match status" value="1"/>
</dbReference>
<dbReference type="PANTHER" id="PTHR30308">
    <property type="entry name" value="TMRNA-BINDING COMPONENT OF TRANS-TRANSLATION TAGGING COMPLEX"/>
    <property type="match status" value="1"/>
</dbReference>
<dbReference type="Pfam" id="PF01668">
    <property type="entry name" value="SmpB"/>
    <property type="match status" value="1"/>
</dbReference>
<dbReference type="SUPFAM" id="SSF74982">
    <property type="entry name" value="Small protein B (SmpB)"/>
    <property type="match status" value="1"/>
</dbReference>
<dbReference type="PROSITE" id="PS01317">
    <property type="entry name" value="SSRP"/>
    <property type="match status" value="1"/>
</dbReference>
<organism>
    <name type="scientific">Bifidobacterium adolescentis (strain ATCC 15703 / DSM 20083 / NCTC 11814 / E194a)</name>
    <dbReference type="NCBI Taxonomy" id="367928"/>
    <lineage>
        <taxon>Bacteria</taxon>
        <taxon>Bacillati</taxon>
        <taxon>Actinomycetota</taxon>
        <taxon>Actinomycetes</taxon>
        <taxon>Bifidobacteriales</taxon>
        <taxon>Bifidobacteriaceae</taxon>
        <taxon>Bifidobacterium</taxon>
    </lineage>
</organism>
<sequence length="159" mass="18322">MAKEQGTKPIAQNKKARHDYAIEDKYEAGLVLTGTEVKSLREGRASLAESFITIDRRGEMWLEGANIPEYLNGTWNNHAPKRKRKLLLHAAQIDKLARQTQAKGFTIIPLSLYFKDGRVKVEIALARGKKEFDKRQSLREEQDKREALRAMRYANKQVR</sequence>
<comment type="function">
    <text evidence="1">Required for rescue of stalled ribosomes mediated by trans-translation. Binds to transfer-messenger RNA (tmRNA), required for stable association of tmRNA with ribosomes. tmRNA and SmpB together mimic tRNA shape, replacing the anticodon stem-loop with SmpB. tmRNA is encoded by the ssrA gene; the 2 termini fold to resemble tRNA(Ala) and it encodes a 'tag peptide', a short internal open reading frame. During trans-translation Ala-aminoacylated tmRNA acts like a tRNA, entering the A-site of stalled ribosomes, displacing the stalled mRNA. The ribosome then switches to translate the ORF on the tmRNA; the nascent peptide is terminated with the 'tag peptide' encoded by the tmRNA and targeted for degradation. The ribosome is freed to recommence translation, which seems to be the essential function of trans-translation.</text>
</comment>
<comment type="subcellular location">
    <subcellularLocation>
        <location evidence="1">Cytoplasm</location>
    </subcellularLocation>
    <text evidence="1">The tmRNA-SmpB complex associates with stalled 70S ribosomes.</text>
</comment>
<comment type="similarity">
    <text evidence="1">Belongs to the SmpB family.</text>
</comment>
<reference key="1">
    <citation type="submission" date="2006-12" db="EMBL/GenBank/DDBJ databases">
        <title>Bifidobacterium adolescentis complete genome sequence.</title>
        <authorList>
            <person name="Suzuki T."/>
            <person name="Tsuda Y."/>
            <person name="Kanou N."/>
            <person name="Inoue T."/>
            <person name="Kumazaki K."/>
            <person name="Nagano S."/>
            <person name="Hirai S."/>
            <person name="Tanaka K."/>
            <person name="Watanabe K."/>
        </authorList>
    </citation>
    <scope>NUCLEOTIDE SEQUENCE [LARGE SCALE GENOMIC DNA]</scope>
    <source>
        <strain>ATCC 15703 / DSM 20083 / NCTC 11814 / E194a</strain>
    </source>
</reference>
<feature type="chain" id="PRO_1000002002" description="SsrA-binding protein">
    <location>
        <begin position="1"/>
        <end position="159"/>
    </location>
</feature>
<name>SSRP_BIFAA</name>
<protein>
    <recommendedName>
        <fullName evidence="1">SsrA-binding protein</fullName>
    </recommendedName>
    <alternativeName>
        <fullName evidence="1">Small protein B</fullName>
    </alternativeName>
</protein>
<keyword id="KW-0963">Cytoplasm</keyword>
<keyword id="KW-1185">Reference proteome</keyword>
<keyword id="KW-0694">RNA-binding</keyword>
<proteinExistence type="inferred from homology"/>
<evidence type="ECO:0000255" key="1">
    <source>
        <dbReference type="HAMAP-Rule" id="MF_00023"/>
    </source>
</evidence>
<gene>
    <name evidence="1" type="primary">smpB</name>
    <name type="ordered locus">BAD_0467</name>
</gene>